<dbReference type="EC" id="3.4.23.32"/>
<dbReference type="EMBL" id="AB038553">
    <property type="protein sequence ID" value="BAA92164.1"/>
    <property type="molecule type" value="mRNA"/>
</dbReference>
<dbReference type="EMBL" id="D83963">
    <property type="protein sequence ID" value="BAA12157.1"/>
    <property type="molecule type" value="Genomic_DNA"/>
</dbReference>
<dbReference type="PIR" id="A28864">
    <property type="entry name" value="A28864"/>
</dbReference>
<dbReference type="PIR" id="JC4883">
    <property type="entry name" value="JC4883"/>
</dbReference>
<dbReference type="PIR" id="JE0300">
    <property type="entry name" value="JE0300"/>
</dbReference>
<dbReference type="PDB" id="1S2B">
    <property type="method" value="X-ray"/>
    <property type="resolution" value="2.10 A"/>
    <property type="chains" value="A=55-260"/>
</dbReference>
<dbReference type="PDB" id="1S2K">
    <property type="method" value="X-ray"/>
    <property type="resolution" value="2.00 A"/>
    <property type="chains" value="A=55-260"/>
</dbReference>
<dbReference type="PDB" id="2IFR">
    <property type="method" value="X-ray"/>
    <property type="resolution" value="1.95 A"/>
    <property type="chains" value="A=55-260"/>
</dbReference>
<dbReference type="PDB" id="2IFW">
    <property type="method" value="X-ray"/>
    <property type="resolution" value="2.30 A"/>
    <property type="chains" value="A/B=55-260"/>
</dbReference>
<dbReference type="PDBsum" id="1S2B"/>
<dbReference type="PDBsum" id="1S2K"/>
<dbReference type="PDBsum" id="2IFR"/>
<dbReference type="PDBsum" id="2IFW"/>
<dbReference type="SMR" id="P15369"/>
<dbReference type="MEROPS" id="G01.001"/>
<dbReference type="KEGG" id="ag:BAA92164"/>
<dbReference type="BRENDA" id="3.4.23.32">
    <property type="organism ID" value="5643"/>
</dbReference>
<dbReference type="EvolutionaryTrace" id="P15369"/>
<dbReference type="GO" id="GO:0004190">
    <property type="term" value="F:aspartic-type endopeptidase activity"/>
    <property type="evidence" value="ECO:0007669"/>
    <property type="project" value="UniProtKB-KW"/>
</dbReference>
<dbReference type="GO" id="GO:0070007">
    <property type="term" value="F:glutamic-type endopeptidase activity"/>
    <property type="evidence" value="ECO:0007669"/>
    <property type="project" value="InterPro"/>
</dbReference>
<dbReference type="GO" id="GO:0006508">
    <property type="term" value="P:proteolysis"/>
    <property type="evidence" value="ECO:0007669"/>
    <property type="project" value="UniProtKB-KW"/>
</dbReference>
<dbReference type="CDD" id="cd13425">
    <property type="entry name" value="Peptidase_G1_like"/>
    <property type="match status" value="1"/>
</dbReference>
<dbReference type="Gene3D" id="2.60.120.700">
    <property type="entry name" value="Peptidase G1"/>
    <property type="match status" value="1"/>
</dbReference>
<dbReference type="InterPro" id="IPR013320">
    <property type="entry name" value="ConA-like_dom_sf"/>
</dbReference>
<dbReference type="InterPro" id="IPR000250">
    <property type="entry name" value="Peptidase_G1"/>
</dbReference>
<dbReference type="InterPro" id="IPR038656">
    <property type="entry name" value="Peptidase_G1_sf"/>
</dbReference>
<dbReference type="InterPro" id="IPR033863">
    <property type="entry name" value="Scytalidoglutamic_peptidase"/>
</dbReference>
<dbReference type="PANTHER" id="PTHR37536:SF1">
    <property type="entry name" value="ASPERGILLOPEPSIN, PUTAITVE (AFU_ORTHOLOGUE AFUA_7G01200)"/>
    <property type="match status" value="1"/>
</dbReference>
<dbReference type="PANTHER" id="PTHR37536">
    <property type="entry name" value="PUTATIVE (AFU_ORTHOLOGUE AFUA_3G02970)-RELATED"/>
    <property type="match status" value="1"/>
</dbReference>
<dbReference type="Pfam" id="PF01828">
    <property type="entry name" value="Peptidase_A4"/>
    <property type="match status" value="1"/>
</dbReference>
<dbReference type="PRINTS" id="PR00977">
    <property type="entry name" value="SCYTLDPTASE"/>
</dbReference>
<dbReference type="SUPFAM" id="SSF49899">
    <property type="entry name" value="Concanavalin A-like lectins/glucanases"/>
    <property type="match status" value="1"/>
</dbReference>
<proteinExistence type="evidence at protein level"/>
<sequence length="260" mass="27165">MKFTTAAVLSALVSAEIAFAAPGGNGFARRQARRQARAAGLKASPFRQVNAKEATVESNWGGAILIGSDFDTVSATANVPSASGGSSAAGTAWVGIDGDTCQTAILQTGFDWYGDGTYDAWYEWYPEVSDDFSGITISEGDSIQMSVTATSDTSGSATLENLTTGQKVSKSFSNESSGSLCRTNAEFIIEDFEECNSNGSDCEFVPFASFSPAVEFTDCSVTSDGESVSLDDAQITQVIINNQDVTDCSVSGTTVSCSYV</sequence>
<feature type="signal peptide" evidence="1">
    <location>
        <begin position="1"/>
        <end position="20"/>
    </location>
</feature>
<feature type="propeptide" id="PRO_0000028493" evidence="3">
    <location>
        <begin position="21"/>
        <end position="54"/>
    </location>
</feature>
<feature type="chain" id="PRO_0000028494" description="Scytalidopepsin B">
    <location>
        <begin position="55"/>
        <end position="260"/>
    </location>
</feature>
<feature type="active site" description="Proton acceptor" evidence="2">
    <location>
        <position position="190"/>
    </location>
</feature>
<feature type="site" description="Transition state stabilizer">
    <location>
        <position position="107"/>
    </location>
</feature>
<feature type="disulfide bond" evidence="2">
    <location>
        <begin position="101"/>
        <end position="181"/>
    </location>
</feature>
<feature type="disulfide bond" evidence="2">
    <location>
        <begin position="195"/>
        <end position="219"/>
    </location>
</feature>
<feature type="disulfide bond" evidence="2">
    <location>
        <begin position="248"/>
        <end position="257"/>
    </location>
</feature>
<feature type="sequence conflict" description="In Ref. 3; AA sequence." evidence="4" ref="3">
    <original>SGGSSAAGT</original>
    <variation>TGASGGSSA</variation>
    <location>
        <begin position="83"/>
        <end position="91"/>
    </location>
</feature>
<feature type="sequence conflict" description="In Ref. 3; AA sequence." evidence="4" ref="3">
    <location>
        <position position="179"/>
    </location>
</feature>
<feature type="sequence conflict" description="In Ref. 3; AA sequence." evidence="4" ref="3">
    <original>N</original>
    <variation>D</variation>
    <location>
        <position position="198"/>
    </location>
</feature>
<feature type="sequence conflict" description="In Ref. 3; AA sequence." evidence="4" ref="3">
    <location>
        <position position="202"/>
    </location>
</feature>
<feature type="strand" evidence="6">
    <location>
        <begin position="56"/>
        <end position="58"/>
    </location>
</feature>
<feature type="strand" evidence="6">
    <location>
        <begin position="60"/>
        <end position="66"/>
    </location>
</feature>
<feature type="strand" evidence="6">
    <location>
        <begin position="70"/>
        <end position="78"/>
    </location>
</feature>
<feature type="strand" evidence="6">
    <location>
        <begin position="81"/>
        <end position="96"/>
    </location>
</feature>
<feature type="strand" evidence="6">
    <location>
        <begin position="98"/>
        <end position="100"/>
    </location>
</feature>
<feature type="strand" evidence="6">
    <location>
        <begin position="105"/>
        <end position="114"/>
    </location>
</feature>
<feature type="strand" evidence="6">
    <location>
        <begin position="118"/>
        <end position="127"/>
    </location>
</feature>
<feature type="strand" evidence="6">
    <location>
        <begin position="129"/>
        <end position="131"/>
    </location>
</feature>
<feature type="strand" evidence="6">
    <location>
        <begin position="142"/>
        <end position="151"/>
    </location>
</feature>
<feature type="strand" evidence="6">
    <location>
        <begin position="154"/>
        <end position="161"/>
    </location>
</feature>
<feature type="turn" evidence="6">
    <location>
        <begin position="162"/>
        <end position="165"/>
    </location>
</feature>
<feature type="strand" evidence="6">
    <location>
        <begin position="166"/>
        <end position="172"/>
    </location>
</feature>
<feature type="strand" evidence="6">
    <location>
        <begin position="184"/>
        <end position="190"/>
    </location>
</feature>
<feature type="strand" evidence="6">
    <location>
        <begin position="193"/>
        <end position="195"/>
    </location>
</feature>
<feature type="turn" evidence="5">
    <location>
        <begin position="197"/>
        <end position="200"/>
    </location>
</feature>
<feature type="strand" evidence="6">
    <location>
        <begin position="202"/>
        <end position="204"/>
    </location>
</feature>
<feature type="strand" evidence="6">
    <location>
        <begin position="209"/>
        <end position="212"/>
    </location>
</feature>
<feature type="strand" evidence="6">
    <location>
        <begin position="214"/>
        <end position="223"/>
    </location>
</feature>
<feature type="strand" evidence="6">
    <location>
        <begin position="226"/>
        <end position="228"/>
    </location>
</feature>
<feature type="helix" evidence="7">
    <location>
        <begin position="230"/>
        <end position="232"/>
    </location>
</feature>
<feature type="strand" evidence="6">
    <location>
        <begin position="234"/>
        <end position="236"/>
    </location>
</feature>
<feature type="strand" evidence="6">
    <location>
        <begin position="246"/>
        <end position="251"/>
    </location>
</feature>
<feature type="strand" evidence="6">
    <location>
        <begin position="254"/>
        <end position="259"/>
    </location>
</feature>
<name>PRTB_SCYLI</name>
<reference key="1">
    <citation type="journal article" date="1998" name="Biosci. Biotechnol. Biochem.">
        <title>Nucleotide sequence of the gene encoding the precursor protein of pepstatin insensitive acid protease B, scytalidopepsin B, from Scytalidium lignicolum.</title>
        <authorList>
            <person name="Oda N."/>
            <person name="Gotoh Y."/>
            <person name="Oyama H."/>
            <person name="Murao S."/>
            <person name="Oda K."/>
            <person name="Tsuru D."/>
        </authorList>
    </citation>
    <scope>NUCLEOTIDE SEQUENCE [MRNA]</scope>
</reference>
<reference key="2">
    <citation type="journal article" date="1996" name="Biosci. Biotechnol. Biochem.">
        <title>Nucleotide sequence of the gene encoding pepstatin-insensitive acid protease B, Scytalidopepsin B, of Scytalidium lignicolum.</title>
        <authorList>
            <person name="Kakimori T."/>
            <person name="Yoshimoto T."/>
            <person name="Oyama H."/>
            <person name="Oda N."/>
            <person name="Gotoh Y."/>
            <person name="Oda K."/>
            <person name="Murao S."/>
            <person name="Tsuru D."/>
        </authorList>
    </citation>
    <scope>NUCLEOTIDE SEQUENCE [GENOMIC DNA] OF 50-260</scope>
</reference>
<reference key="3">
    <citation type="journal article" date="1984" name="J. Biochem.">
        <title>Complete amino acid sequence of Scytalidium lignicolum acid protease B.</title>
        <authorList>
            <person name="Maita T."/>
            <person name="Nagata S."/>
            <person name="Matsuda G."/>
            <person name="Maruta S."/>
            <person name="Oda K."/>
            <person name="Murao S."/>
            <person name="Tsuru D."/>
        </authorList>
    </citation>
    <scope>PROTEIN SEQUENCE OF 55-260</scope>
</reference>
<reference key="4">
    <citation type="journal article" date="2004" name="Proc. Natl. Acad. Sci. U.S.A.">
        <title>The molecular structure and catalytic mechanism of a novel carboxyl peptidase from Scytalidium lignicolum.</title>
        <authorList>
            <person name="Fujinaga M."/>
            <person name="Cherney M.M."/>
            <person name="Oyama H."/>
            <person name="Oda K."/>
            <person name="James M.N."/>
        </authorList>
    </citation>
    <scope>X-RAY CRYSTALLOGRAPHY (2.0 ANGSTROMS) OF 55-260</scope>
    <scope>ACTIVE SITE</scope>
    <scope>DISULFIDE BONDS</scope>
</reference>
<accession>P15369</accession>
<accession>Q92333</accession>
<accession>Q9P962</accession>
<comment type="catalytic activity">
    <reaction>
        <text>Hydrolysis of proteins with broad specificity, cleaving 24-Phe-|-Phe-25, but not 15-Leu-|-Tyr-16 and 25-Phe-|-Tyr-26 in the B chain of insulin.</text>
        <dbReference type="EC" id="3.4.23.32"/>
    </reaction>
</comment>
<comment type="subunit">
    <text>Monomer.</text>
</comment>
<comment type="similarity">
    <text evidence="4">Belongs to the peptidase G1 family.</text>
</comment>
<evidence type="ECO:0000255" key="1"/>
<evidence type="ECO:0000269" key="2">
    <source>
    </source>
</evidence>
<evidence type="ECO:0000269" key="3">
    <source>
    </source>
</evidence>
<evidence type="ECO:0000305" key="4"/>
<evidence type="ECO:0007829" key="5">
    <source>
        <dbReference type="PDB" id="1S2K"/>
    </source>
</evidence>
<evidence type="ECO:0007829" key="6">
    <source>
        <dbReference type="PDB" id="2IFR"/>
    </source>
</evidence>
<evidence type="ECO:0007829" key="7">
    <source>
        <dbReference type="PDB" id="2IFW"/>
    </source>
</evidence>
<keyword id="KW-0002">3D-structure</keyword>
<keyword id="KW-0064">Aspartyl protease</keyword>
<keyword id="KW-0903">Direct protein sequencing</keyword>
<keyword id="KW-1015">Disulfide bond</keyword>
<keyword id="KW-0378">Hydrolase</keyword>
<keyword id="KW-0645">Protease</keyword>
<keyword id="KW-0732">Signal</keyword>
<keyword id="KW-0865">Zymogen</keyword>
<protein>
    <recommendedName>
        <fullName>Scytalidopepsin B</fullName>
        <shortName>SLB</shortName>
        <ecNumber>3.4.23.32</ecNumber>
    </recommendedName>
    <alternativeName>
        <fullName>Acid protease B</fullName>
    </alternativeName>
</protein>
<organism>
    <name type="scientific">Scytalidium lignicola</name>
    <name type="common">Hyphomycete</name>
    <dbReference type="NCBI Taxonomy" id="5539"/>
    <lineage>
        <taxon>Eukaryota</taxon>
        <taxon>Fungi</taxon>
        <taxon>Dikarya</taxon>
        <taxon>Ascomycota</taxon>
        <taxon>Pezizomycotina</taxon>
        <taxon>Leotiomycetes</taxon>
        <taxon>Leotiomycetes incertae sedis</taxon>
        <taxon>Scytalidium</taxon>
    </lineage>
</organism>